<protein>
    <recommendedName>
        <fullName>Altered inheritance of mitochondria protein 4</fullName>
    </recommendedName>
    <alternativeName>
        <fullName>Synthetic with old yellow enzyme protein 1</fullName>
    </alternativeName>
</protein>
<evidence type="ECO:0000250" key="1"/>
<evidence type="ECO:0000256" key="2">
    <source>
        <dbReference type="SAM" id="MobiDB-lite"/>
    </source>
</evidence>
<evidence type="ECO:0000305" key="3"/>
<accession>D3UET8</accession>
<comment type="subunit">
    <text evidence="1">May interact with the nuclear pore complex.</text>
</comment>
<comment type="subcellular location">
    <subcellularLocation>
        <location evidence="1">Cytoplasm</location>
    </subcellularLocation>
</comment>
<comment type="similarity">
    <text evidence="3">Belongs to the AIM4 family.</text>
</comment>
<keyword id="KW-0963">Cytoplasm</keyword>
<proteinExistence type="inferred from homology"/>
<reference key="1">
    <citation type="journal article" date="2009" name="Proc. Natl. Acad. Sci. U.S.A.">
        <title>Eukaryote-to-eukaryote gene transfer events revealed by the genome sequence of the wine yeast Saccharomyces cerevisiae EC1118.</title>
        <authorList>
            <person name="Novo M."/>
            <person name="Bigey F."/>
            <person name="Beyne E."/>
            <person name="Galeote V."/>
            <person name="Gavory F."/>
            <person name="Mallet S."/>
            <person name="Cambon B."/>
            <person name="Legras J.-L."/>
            <person name="Wincker P."/>
            <person name="Casaregola S."/>
            <person name="Dequin S."/>
        </authorList>
    </citation>
    <scope>NUCLEOTIDE SEQUENCE [LARGE SCALE GENOMIC DNA]</scope>
    <source>
        <strain>Lalvin EC1118 / Prise de mousse</strain>
    </source>
</reference>
<feature type="chain" id="PRO_0000399860" description="Altered inheritance of mitochondria protein 4">
    <location>
        <begin position="1"/>
        <end position="123"/>
    </location>
</feature>
<feature type="region of interest" description="Disordered" evidence="2">
    <location>
        <begin position="1"/>
        <end position="42"/>
    </location>
</feature>
<feature type="compositionally biased region" description="Basic and acidic residues" evidence="2">
    <location>
        <begin position="1"/>
        <end position="16"/>
    </location>
</feature>
<feature type="compositionally biased region" description="Basic residues" evidence="2">
    <location>
        <begin position="17"/>
        <end position="28"/>
    </location>
</feature>
<gene>
    <name type="primary">AIM4</name>
    <name type="synonym">SOY1</name>
    <name type="ORF">EC1118_1B15_3598g</name>
</gene>
<sequence length="123" mass="14262">MDRKKDPSNNLTERRVSKVQRPNKKKVRNQVESLSRNLERNKEGQLLQTVSKGHLEADSGHSLGREKENGELGIRSIFYDKDWNPRGTAPSHYRNIPYNPATFKRRTEVQARLGNLENIKIPK</sequence>
<name>AIM4_YEAS8</name>
<organism>
    <name type="scientific">Saccharomyces cerevisiae (strain Lalvin EC1118 / Prise de mousse)</name>
    <name type="common">Baker's yeast</name>
    <dbReference type="NCBI Taxonomy" id="643680"/>
    <lineage>
        <taxon>Eukaryota</taxon>
        <taxon>Fungi</taxon>
        <taxon>Dikarya</taxon>
        <taxon>Ascomycota</taxon>
        <taxon>Saccharomycotina</taxon>
        <taxon>Saccharomycetes</taxon>
        <taxon>Saccharomycetales</taxon>
        <taxon>Saccharomycetaceae</taxon>
        <taxon>Saccharomyces</taxon>
    </lineage>
</organism>
<dbReference type="EMBL" id="FN393060">
    <property type="protein sequence ID" value="CBK39268.1"/>
    <property type="molecule type" value="Genomic_DNA"/>
</dbReference>
<dbReference type="SMR" id="D3UET8"/>
<dbReference type="HOGENOM" id="CLU_2016514_0_0_1"/>
<dbReference type="OrthoDB" id="13632at4893"/>
<dbReference type="Proteomes" id="UP000000286">
    <property type="component" value="Chromosome II, Scaffold EC1118_1B15"/>
</dbReference>
<dbReference type="GO" id="GO:0005737">
    <property type="term" value="C:cytoplasm"/>
    <property type="evidence" value="ECO:0007669"/>
    <property type="project" value="UniProtKB-SubCell"/>
</dbReference>
<dbReference type="Pfam" id="PF12622">
    <property type="entry name" value="NpwBP"/>
    <property type="match status" value="1"/>
</dbReference>